<reference key="1">
    <citation type="journal article" date="1994" name="Immunology">
        <title>Isolation, sequence and expression of a cDNA encoding the alpha-chain of the feline CD8.</title>
        <authorList>
            <person name="Pecoraro M."/>
            <person name="Kawaguchi Y."/>
            <person name="Miyazawa T."/>
            <person name="Norimine J."/>
            <person name="Maeda K."/>
            <person name="Toyosaki T."/>
            <person name="Tohya Y."/>
            <person name="Kai C."/>
            <person name="Mikami T."/>
        </authorList>
    </citation>
    <scope>NUCLEOTIDE SEQUENCE [MRNA]</scope>
    <source>
        <tissue>Thymus</tissue>
    </source>
</reference>
<reference key="2">
    <citation type="submission" date="1997-01" db="EMBL/GenBank/DDBJ databases">
        <authorList>
            <person name="Miyazawa T."/>
        </authorList>
    </citation>
    <scope>NUCLEOTIDE SEQUENCE [MRNA]</scope>
    <source>
        <tissue>Thymus</tissue>
    </source>
</reference>
<sequence length="239" mass="26120">MASPVTAQLLPLALLLHAAAAAGPSPFRLSPVRVEGRLGQRVELQCEVLLSSAAPGCTWLFQKNEPAARPIFLAYLSRSRTKLAEELDPKQISGQRIQDTLYSLTLHRFRKEEEGYYFCSVVSNSVLYFSAFVPVFLPVKPTTTPAPRPPTQAPITTSQRVSLRPGTCQPSAGSTVEASGLDLSCDIYIWAPLAGTCAFLLLSLVITVICNHRNRRRVCKCPRPVVRAGGKPSPSERYV</sequence>
<gene>
    <name type="primary">CD8A</name>
</gene>
<feature type="signal peptide" evidence="2">
    <location>
        <begin position="1"/>
        <end position="21"/>
    </location>
</feature>
<feature type="chain" id="PRO_0000014637" description="T-cell surface glycoprotein CD8 alpha chain">
    <location>
        <begin position="22"/>
        <end position="239"/>
    </location>
</feature>
<feature type="topological domain" description="Extracellular" evidence="2">
    <location>
        <begin position="22"/>
        <end position="188"/>
    </location>
</feature>
<feature type="transmembrane region" description="Helical" evidence="2">
    <location>
        <begin position="189"/>
        <end position="210"/>
    </location>
</feature>
<feature type="topological domain" description="Cytoplasmic" evidence="2">
    <location>
        <begin position="211"/>
        <end position="239"/>
    </location>
</feature>
<feature type="domain" description="Ig-like V-type">
    <location>
        <begin position="25"/>
        <end position="139"/>
    </location>
</feature>
<feature type="lipid moiety-binding region" description="S-palmitoyl cysteine" evidence="1">
    <location>
        <position position="210"/>
    </location>
</feature>
<feature type="disulfide bond" evidence="3">
    <location>
        <begin position="46"/>
        <end position="119"/>
    </location>
</feature>
<proteinExistence type="evidence at transcript level"/>
<keyword id="KW-1064">Adaptive immunity</keyword>
<keyword id="KW-1003">Cell membrane</keyword>
<keyword id="KW-1015">Disulfide bond</keyword>
<keyword id="KW-0325">Glycoprotein</keyword>
<keyword id="KW-0391">Immunity</keyword>
<keyword id="KW-0393">Immunoglobulin domain</keyword>
<keyword id="KW-0449">Lipoprotein</keyword>
<keyword id="KW-0472">Membrane</keyword>
<keyword id="KW-0564">Palmitate</keyword>
<keyword id="KW-1185">Reference proteome</keyword>
<keyword id="KW-0732">Signal</keyword>
<keyword id="KW-0812">Transmembrane</keyword>
<keyword id="KW-1133">Transmembrane helix</keyword>
<accession>P41688</accession>
<evidence type="ECO:0000250" key="1">
    <source>
        <dbReference type="UniProtKB" id="P01732"/>
    </source>
</evidence>
<evidence type="ECO:0000255" key="2"/>
<evidence type="ECO:0000255" key="3">
    <source>
        <dbReference type="PROSITE-ProRule" id="PRU00114"/>
    </source>
</evidence>
<protein>
    <recommendedName>
        <fullName>T-cell surface glycoprotein CD8 alpha chain</fullName>
    </recommendedName>
    <cdAntigenName>CD8a</cdAntigenName>
</protein>
<organism>
    <name type="scientific">Felis catus</name>
    <name type="common">Cat</name>
    <name type="synonym">Felis silvestris catus</name>
    <dbReference type="NCBI Taxonomy" id="9685"/>
    <lineage>
        <taxon>Eukaryota</taxon>
        <taxon>Metazoa</taxon>
        <taxon>Chordata</taxon>
        <taxon>Craniata</taxon>
        <taxon>Vertebrata</taxon>
        <taxon>Euteleostomi</taxon>
        <taxon>Mammalia</taxon>
        <taxon>Eutheria</taxon>
        <taxon>Laurasiatheria</taxon>
        <taxon>Carnivora</taxon>
        <taxon>Feliformia</taxon>
        <taxon>Felidae</taxon>
        <taxon>Felinae</taxon>
        <taxon>Felis</taxon>
    </lineage>
</organism>
<dbReference type="EMBL" id="D16536">
    <property type="protein sequence ID" value="BAA03973.1"/>
    <property type="molecule type" value="mRNA"/>
</dbReference>
<dbReference type="EMBL" id="AB000485">
    <property type="protein sequence ID" value="BAA19126.1"/>
    <property type="molecule type" value="mRNA"/>
</dbReference>
<dbReference type="PIR" id="I46082">
    <property type="entry name" value="I46082"/>
</dbReference>
<dbReference type="RefSeq" id="NP_001009843.1">
    <property type="nucleotide sequence ID" value="NM_001009843.2"/>
</dbReference>
<dbReference type="SMR" id="P41688"/>
<dbReference type="FunCoup" id="P41688">
    <property type="interactions" value="47"/>
</dbReference>
<dbReference type="STRING" id="9685.ENSFCAP00000059196"/>
<dbReference type="PaxDb" id="9685-ENSFCAP00000013754"/>
<dbReference type="GeneID" id="493799"/>
<dbReference type="KEGG" id="fca:493799"/>
<dbReference type="CTD" id="925"/>
<dbReference type="eggNOG" id="ENOG502SAZN">
    <property type="taxonomic scope" value="Eukaryota"/>
</dbReference>
<dbReference type="InParanoid" id="P41688"/>
<dbReference type="OrthoDB" id="9906515at2759"/>
<dbReference type="TreeFam" id="TF336070"/>
<dbReference type="Proteomes" id="UP000011712">
    <property type="component" value="Unplaced"/>
</dbReference>
<dbReference type="GO" id="GO:0009897">
    <property type="term" value="C:external side of plasma membrane"/>
    <property type="evidence" value="ECO:0000318"/>
    <property type="project" value="GO_Central"/>
</dbReference>
<dbReference type="GO" id="GO:0007166">
    <property type="term" value="P:cell surface receptor signaling pathway"/>
    <property type="evidence" value="ECO:0000318"/>
    <property type="project" value="GO_Central"/>
</dbReference>
<dbReference type="GO" id="GO:0045065">
    <property type="term" value="P:cytotoxic T cell differentiation"/>
    <property type="evidence" value="ECO:0000318"/>
    <property type="project" value="GO_Central"/>
</dbReference>
<dbReference type="GO" id="GO:0002456">
    <property type="term" value="P:T cell mediated immunity"/>
    <property type="evidence" value="ECO:0000318"/>
    <property type="project" value="GO_Central"/>
</dbReference>
<dbReference type="FunFam" id="2.60.40.10:FF:000956">
    <property type="entry name" value="T-cell surface glycoprotein CD8 alpha chain"/>
    <property type="match status" value="1"/>
</dbReference>
<dbReference type="Gene3D" id="2.60.40.10">
    <property type="entry name" value="Immunoglobulins"/>
    <property type="match status" value="1"/>
</dbReference>
<dbReference type="InterPro" id="IPR015468">
    <property type="entry name" value="CD8_asu"/>
</dbReference>
<dbReference type="InterPro" id="IPR007110">
    <property type="entry name" value="Ig-like_dom"/>
</dbReference>
<dbReference type="InterPro" id="IPR036179">
    <property type="entry name" value="Ig-like_dom_sf"/>
</dbReference>
<dbReference type="InterPro" id="IPR013783">
    <property type="entry name" value="Ig-like_fold"/>
</dbReference>
<dbReference type="InterPro" id="IPR003599">
    <property type="entry name" value="Ig_sub"/>
</dbReference>
<dbReference type="InterPro" id="IPR013106">
    <property type="entry name" value="Ig_V-set"/>
</dbReference>
<dbReference type="PANTHER" id="PTHR10441">
    <property type="entry name" value="CD8 ALPHA CHAIN"/>
    <property type="match status" value="1"/>
</dbReference>
<dbReference type="PANTHER" id="PTHR10441:SF2">
    <property type="entry name" value="T-CELL SURFACE GLYCOPROTEIN CD8 ALPHA CHAIN"/>
    <property type="match status" value="1"/>
</dbReference>
<dbReference type="Pfam" id="PF07686">
    <property type="entry name" value="V-set"/>
    <property type="match status" value="1"/>
</dbReference>
<dbReference type="SMART" id="SM00409">
    <property type="entry name" value="IG"/>
    <property type="match status" value="1"/>
</dbReference>
<dbReference type="SMART" id="SM00406">
    <property type="entry name" value="IGv"/>
    <property type="match status" value="1"/>
</dbReference>
<dbReference type="SUPFAM" id="SSF48726">
    <property type="entry name" value="Immunoglobulin"/>
    <property type="match status" value="1"/>
</dbReference>
<dbReference type="PROSITE" id="PS50835">
    <property type="entry name" value="IG_LIKE"/>
    <property type="match status" value="1"/>
</dbReference>
<comment type="function">
    <text evidence="1">Integral membrane glycoprotein that plays an essential role in the immune response and serves multiple functions in responses against both external and internal offenses. In T-cells, functions primarily as a coreceptor for MHC class I molecule:peptide complex. The antigens presented by class I peptides are derived from cytosolic proteins while class II derived from extracellular proteins. Interacts simultaneously with the T-cell receptor (TCR) and the MHC class I proteins presented by antigen presenting cells (APCs). In turn, recruits the Src kinase LCK to the vicinity of the TCR-CD3 complex. LCK then initiates different intracellular signaling pathways by phosphorylating various substrates ultimately leading to lymphokine production, motility, adhesion and activation of cytotoxic T-lymphocytes (CTLs). This mechanism enables CTLs to recognize and eliminate infected cells and tumor cells. In NK-cells, the presence of CD8A homodimers at the cell surface provides a survival mechanism allowing conjugation and lysis of multiple target cells. CD8A homodimer molecules also promote the survival and differentiation of activated lymphocytes into memory CD8 T-cells.</text>
</comment>
<comment type="subunit">
    <text evidence="1">Forms disulfide-linked heterodimers with CD8B at the cell surface. Also forms homodimers in several cell types including NK-cells or peripheral blood T-lymphocytes. Interacts with the MHC class I HLA-A/B2M dimer. Interacts with LCK in a zinc-dependent manner.</text>
</comment>
<comment type="subcellular location">
    <subcellularLocation>
        <location evidence="1">Cell membrane</location>
        <topology evidence="1">Single-pass type I membrane protein</topology>
    </subcellularLocation>
    <text evidence="1">CD8A localizes to lipid rafts only when associated with its partner CD8B.</text>
</comment>
<comment type="PTM">
    <text evidence="1">Palmitoylated, but association with CD8B seems to be more important for the enrichment of CD8A in lipid rafts.</text>
</comment>
<comment type="PTM">
    <text evidence="1">O-glycosylated.</text>
</comment>
<comment type="PTM">
    <text evidence="1">Phosphorylated in cytotoxic T-lymphocytes (CTLs) following activation.</text>
</comment>
<name>CD8A_FELCA</name>